<accession>Q61009</accession>
<accession>D3Z2V4</accession>
<accession>Q3TZ42</accession>
<accession>Q4FK30</accession>
<accession>Q9CWJ7</accession>
<keyword id="KW-0002">3D-structure</keyword>
<keyword id="KW-0025">Alternative splicing</keyword>
<keyword id="KW-1003">Cell membrane</keyword>
<keyword id="KW-1015">Disulfide bond</keyword>
<keyword id="KW-0325">Glycoprotein</keyword>
<keyword id="KW-0449">Lipoprotein</keyword>
<keyword id="KW-0472">Membrane</keyword>
<keyword id="KW-0564">Palmitate</keyword>
<keyword id="KW-0675">Receptor</keyword>
<keyword id="KW-1185">Reference proteome</keyword>
<keyword id="KW-0812">Transmembrane</keyword>
<keyword id="KW-1133">Transmembrane helix</keyword>
<comment type="function">
    <text evidence="2 5 6">Receptor for different ligands such as phospholipids, cholesterol ester, lipoproteins, phosphatidylserine and apoptotic cells (By similarity). Both isoform 1 and isoform 2 act as receptors for HDL, mediating selective uptake of cholesteryl ether and HDL-dependent cholesterol efflux (PubMed:9254074, PubMed:9614139). Also facilitates the flux of free and esterified cholesterol between the cell surface and apoB-containing lipoproteins and modified lipoproteins, although less efficiently than HDL. May be involved in the phagocytosis of apoptotic cells, via its phosphatidylserine binding activity (By similarity).</text>
</comment>
<comment type="subunit">
    <text evidence="1">The C-terminal region binds to PDZK1.</text>
</comment>
<comment type="subcellular location">
    <subcellularLocation>
        <location evidence="5 6">Cell membrane</location>
        <topology evidence="1">Multi-pass membrane protein</topology>
    </subcellularLocation>
    <subcellularLocation>
        <location evidence="6">Membrane</location>
        <location evidence="6">Caveola</location>
        <topology evidence="1">Multi-pass membrane protein</topology>
    </subcellularLocation>
    <text evidence="1">Predominantly localized to cholesterol and sphingomyelin-enriched domains within the plasma membrane, called caveolae.</text>
</comment>
<comment type="subcellular location">
    <molecule>Isoform 1</molecule>
    <subcellularLocation>
        <location evidence="6">Cell membrane</location>
    </subcellularLocation>
    <subcellularLocation>
        <location evidence="6">Membrane</location>
        <location evidence="6">Caveola</location>
    </subcellularLocation>
</comment>
<comment type="subcellular location">
    <molecule>Isoform 2</molecule>
    <subcellularLocation>
        <location evidence="6">Cell membrane</location>
    </subcellularLocation>
    <subcellularLocation>
        <location evidence="6">Membrane</location>
        <location evidence="6">Caveola</location>
    </subcellularLocation>
</comment>
<comment type="alternative products">
    <event type="alternative splicing"/>
    <isoform>
        <id>Q61009-1</id>
        <name>1</name>
        <name evidence="7">SR-BI</name>
        <name evidence="8">SR-BI.1</name>
        <sequence type="displayed"/>
    </isoform>
    <isoform>
        <id>Q61009-2</id>
        <name>2</name>
        <name evidence="8">SR-BI.2</name>
        <name evidence="9">SR-BII</name>
        <sequence type="described" ref="VSP_058986"/>
    </isoform>
</comment>
<comment type="tissue specificity">
    <text evidence="4 5 6">Expressed primarily in liver, ovary and adrenal gland, and, at lower levels in other non-placental steroidogenic tissues, including adipose tissue, mammary gland and testis (at protein level) (PubMed:8560269, PubMed:9254074, PubMed:9614139). Isoform 2 is expressed at lower levels than isoform 1 in liver, testis and adrenal gland (PubMed:9614139). At the mRNA, but not at the protein level, isoform 2 is the predominant isoform in testis (80%) (PubMed:9254074).</text>
</comment>
<comment type="induction">
    <text evidence="12">Both isoform 1 and isoform 2 are up-regulated in response to adrenocorticotropic hormone (ACTH).</text>
</comment>
<comment type="PTM">
    <text evidence="1">N-glycosylated.</text>
</comment>
<comment type="PTM">
    <text>The six cysteines of the extracellular domain are all involved in intramolecular disulfide bonds.</text>
</comment>
<comment type="similarity">
    <text evidence="10">Belongs to the CD36 family.</text>
</comment>
<gene>
    <name type="primary">Scarb1</name>
    <name type="synonym">Srb1</name>
</gene>
<proteinExistence type="evidence at protein level"/>
<dbReference type="EMBL" id="U37799">
    <property type="protein sequence ID" value="AAC52378.1"/>
    <property type="molecule type" value="mRNA"/>
</dbReference>
<dbReference type="EMBL" id="AK010622">
    <property type="protein sequence ID" value="BAB27068.1"/>
    <property type="molecule type" value="mRNA"/>
</dbReference>
<dbReference type="EMBL" id="AK028191">
    <property type="protein sequence ID" value="BAC25802.1"/>
    <property type="molecule type" value="mRNA"/>
</dbReference>
<dbReference type="EMBL" id="AK033114">
    <property type="protein sequence ID" value="BAC28157.1"/>
    <property type="molecule type" value="mRNA"/>
</dbReference>
<dbReference type="EMBL" id="AK154933">
    <property type="protein sequence ID" value="BAE32934.1"/>
    <property type="molecule type" value="mRNA"/>
</dbReference>
<dbReference type="EMBL" id="AK158122">
    <property type="protein sequence ID" value="BAE34368.1"/>
    <property type="molecule type" value="mRNA"/>
</dbReference>
<dbReference type="EMBL" id="AK169906">
    <property type="protein sequence ID" value="BAE41449.1"/>
    <property type="molecule type" value="mRNA"/>
</dbReference>
<dbReference type="EMBL" id="AC162802">
    <property type="status" value="NOT_ANNOTATED_CDS"/>
    <property type="molecule type" value="Genomic_DNA"/>
</dbReference>
<dbReference type="EMBL" id="CT010222">
    <property type="protein sequence ID" value="CAJ18430.1"/>
    <property type="molecule type" value="mRNA"/>
</dbReference>
<dbReference type="EMBL" id="CH466529">
    <property type="protein sequence ID" value="EDL19562.1"/>
    <property type="molecule type" value="Genomic_DNA"/>
</dbReference>
<dbReference type="EMBL" id="CH466529">
    <property type="protein sequence ID" value="EDL19563.1"/>
    <property type="molecule type" value="Genomic_DNA"/>
</dbReference>
<dbReference type="EMBL" id="BC004656">
    <property type="protein sequence ID" value="AAH04656.1"/>
    <property type="molecule type" value="mRNA"/>
</dbReference>
<dbReference type="CCDS" id="CCDS19683.1">
    <molecule id="Q61009-1"/>
</dbReference>
<dbReference type="CCDS" id="CCDS57383.1">
    <molecule id="Q61009-2"/>
</dbReference>
<dbReference type="RefSeq" id="NP_001192011.1">
    <molecule id="Q61009-2"/>
    <property type="nucleotide sequence ID" value="NM_001205082.2"/>
</dbReference>
<dbReference type="RefSeq" id="NP_058021.1">
    <molecule id="Q61009-1"/>
    <property type="nucleotide sequence ID" value="NM_016741.3"/>
</dbReference>
<dbReference type="PDB" id="3R69">
    <property type="method" value="X-ray"/>
    <property type="resolution" value="1.50 A"/>
    <property type="chains" value="A/B=505-509"/>
</dbReference>
<dbReference type="PDB" id="5KTF">
    <property type="method" value="NMR"/>
    <property type="chains" value="A=405-475"/>
</dbReference>
<dbReference type="PDBsum" id="3R69"/>
<dbReference type="PDBsum" id="5KTF"/>
<dbReference type="SMR" id="Q61009"/>
<dbReference type="FunCoup" id="Q61009">
    <property type="interactions" value="703"/>
</dbReference>
<dbReference type="STRING" id="10090.ENSMUSP00000083242"/>
<dbReference type="BindingDB" id="Q61009"/>
<dbReference type="ChEMBL" id="CHEMBL1741203"/>
<dbReference type="GlyCosmos" id="Q61009">
    <property type="glycosylation" value="11 sites, No reported glycans"/>
</dbReference>
<dbReference type="GlyGen" id="Q61009">
    <property type="glycosylation" value="11 sites, 3 N-linked glycans (4 sites)"/>
</dbReference>
<dbReference type="iPTMnet" id="Q61009"/>
<dbReference type="PhosphoSitePlus" id="Q61009"/>
<dbReference type="SwissPalm" id="Q61009"/>
<dbReference type="jPOST" id="Q61009"/>
<dbReference type="PaxDb" id="10090-ENSMUSP00000083242"/>
<dbReference type="ProteomicsDB" id="255369">
    <molecule id="Q61009-1"/>
</dbReference>
<dbReference type="ProteomicsDB" id="255370">
    <molecule id="Q61009-2"/>
</dbReference>
<dbReference type="Pumba" id="Q61009"/>
<dbReference type="Antibodypedia" id="31879">
    <property type="antibodies" value="649 antibodies from 40 providers"/>
</dbReference>
<dbReference type="DNASU" id="20778"/>
<dbReference type="Ensembl" id="ENSMUST00000086075.13">
    <molecule id="Q61009-1"/>
    <property type="protein sequence ID" value="ENSMUSP00000083242.7"/>
    <property type="gene ID" value="ENSMUSG00000037936.16"/>
</dbReference>
<dbReference type="Ensembl" id="ENSMUST00000111390.8">
    <molecule id="Q61009-2"/>
    <property type="protein sequence ID" value="ENSMUSP00000107021.2"/>
    <property type="gene ID" value="ENSMUSG00000037936.16"/>
</dbReference>
<dbReference type="GeneID" id="20778"/>
<dbReference type="KEGG" id="mmu:20778"/>
<dbReference type="UCSC" id="uc008zrd.2">
    <molecule id="Q61009-1"/>
    <property type="organism name" value="mouse"/>
</dbReference>
<dbReference type="UCSC" id="uc008zre.2">
    <property type="organism name" value="mouse"/>
</dbReference>
<dbReference type="AGR" id="MGI:893578"/>
<dbReference type="CTD" id="949"/>
<dbReference type="MGI" id="MGI:893578">
    <property type="gene designation" value="Scarb1"/>
</dbReference>
<dbReference type="VEuPathDB" id="HostDB:ENSMUSG00000037936"/>
<dbReference type="eggNOG" id="KOG3776">
    <property type="taxonomic scope" value="Eukaryota"/>
</dbReference>
<dbReference type="GeneTree" id="ENSGT00940000153372"/>
<dbReference type="HOGENOM" id="CLU_019853_4_0_1"/>
<dbReference type="InParanoid" id="Q61009"/>
<dbReference type="OMA" id="DENYWIN"/>
<dbReference type="OrthoDB" id="514335at2759"/>
<dbReference type="PhylomeDB" id="Q61009"/>
<dbReference type="TreeFam" id="TF317925"/>
<dbReference type="Reactome" id="R-MMU-3000471">
    <property type="pathway name" value="Scavenging by Class B Receptors"/>
</dbReference>
<dbReference type="Reactome" id="R-MMU-8964011">
    <property type="pathway name" value="HDL clearance"/>
</dbReference>
<dbReference type="BioGRID-ORCS" id="20778">
    <property type="hits" value="2 hits in 78 CRISPR screens"/>
</dbReference>
<dbReference type="ChiTaRS" id="Scarb1">
    <property type="organism name" value="mouse"/>
</dbReference>
<dbReference type="PRO" id="PR:Q61009"/>
<dbReference type="Proteomes" id="UP000000589">
    <property type="component" value="Chromosome 5"/>
</dbReference>
<dbReference type="RNAct" id="Q61009">
    <property type="molecule type" value="protein"/>
</dbReference>
<dbReference type="Bgee" id="ENSMUSG00000037936">
    <property type="expression patterns" value="Expressed in adrenal gland and 269 other cell types or tissues"/>
</dbReference>
<dbReference type="ExpressionAtlas" id="Q61009">
    <property type="expression patterns" value="baseline and differential"/>
</dbReference>
<dbReference type="GO" id="GO:0005901">
    <property type="term" value="C:caveola"/>
    <property type="evidence" value="ECO:0000314"/>
    <property type="project" value="MGI"/>
</dbReference>
<dbReference type="GO" id="GO:0009986">
    <property type="term" value="C:cell surface"/>
    <property type="evidence" value="ECO:0000314"/>
    <property type="project" value="BHF-UCL"/>
</dbReference>
<dbReference type="GO" id="GO:0005737">
    <property type="term" value="C:cytoplasm"/>
    <property type="evidence" value="ECO:0000314"/>
    <property type="project" value="BHF-UCL"/>
</dbReference>
<dbReference type="GO" id="GO:0005764">
    <property type="term" value="C:lysosome"/>
    <property type="evidence" value="ECO:0007669"/>
    <property type="project" value="Ensembl"/>
</dbReference>
<dbReference type="GO" id="GO:0016020">
    <property type="term" value="C:membrane"/>
    <property type="evidence" value="ECO:0000314"/>
    <property type="project" value="MGI"/>
</dbReference>
<dbReference type="GO" id="GO:0005886">
    <property type="term" value="C:plasma membrane"/>
    <property type="evidence" value="ECO:0000314"/>
    <property type="project" value="MGI"/>
</dbReference>
<dbReference type="GO" id="GO:0001540">
    <property type="term" value="F:amyloid-beta binding"/>
    <property type="evidence" value="ECO:0000316"/>
    <property type="project" value="ARUK-UCL"/>
</dbReference>
<dbReference type="GO" id="GO:0034186">
    <property type="term" value="F:apolipoprotein A-I binding"/>
    <property type="evidence" value="ECO:0007669"/>
    <property type="project" value="Ensembl"/>
</dbReference>
<dbReference type="GO" id="GO:0034185">
    <property type="term" value="F:apolipoprotein binding"/>
    <property type="evidence" value="ECO:0000353"/>
    <property type="project" value="BHF-UCL"/>
</dbReference>
<dbReference type="GO" id="GO:0008035">
    <property type="term" value="F:high-density lipoprotein particle binding"/>
    <property type="evidence" value="ECO:0000314"/>
    <property type="project" value="BHF-UCL"/>
</dbReference>
<dbReference type="GO" id="GO:0070506">
    <property type="term" value="F:high-density lipoprotein particle receptor activity"/>
    <property type="evidence" value="ECO:0000250"/>
    <property type="project" value="BHF-UCL"/>
</dbReference>
<dbReference type="GO" id="GO:0001530">
    <property type="term" value="F:lipopolysaccharide binding"/>
    <property type="evidence" value="ECO:0007669"/>
    <property type="project" value="Ensembl"/>
</dbReference>
<dbReference type="GO" id="GO:0001875">
    <property type="term" value="F:lipopolysaccharide immune receptor activity"/>
    <property type="evidence" value="ECO:0007669"/>
    <property type="project" value="Ensembl"/>
</dbReference>
<dbReference type="GO" id="GO:0030169">
    <property type="term" value="F:low-density lipoprotein particle binding"/>
    <property type="evidence" value="ECO:0000250"/>
    <property type="project" value="BHF-UCL"/>
</dbReference>
<dbReference type="GO" id="GO:0044406">
    <property type="term" value="P:adhesion of symbiont to host"/>
    <property type="evidence" value="ECO:0007669"/>
    <property type="project" value="Ensembl"/>
</dbReference>
<dbReference type="GO" id="GO:0043534">
    <property type="term" value="P:blood vessel endothelial cell migration"/>
    <property type="evidence" value="ECO:0000315"/>
    <property type="project" value="MGI"/>
</dbReference>
<dbReference type="GO" id="GO:0006707">
    <property type="term" value="P:cholesterol catabolic process"/>
    <property type="evidence" value="ECO:0000314"/>
    <property type="project" value="MGI"/>
</dbReference>
<dbReference type="GO" id="GO:0033344">
    <property type="term" value="P:cholesterol efflux"/>
    <property type="evidence" value="ECO:0000314"/>
    <property type="project" value="BHF-UCL"/>
</dbReference>
<dbReference type="GO" id="GO:0042632">
    <property type="term" value="P:cholesterol homeostasis"/>
    <property type="evidence" value="ECO:0000315"/>
    <property type="project" value="BHF-UCL"/>
</dbReference>
<dbReference type="GO" id="GO:0070508">
    <property type="term" value="P:cholesterol import"/>
    <property type="evidence" value="ECO:0000314"/>
    <property type="project" value="BHF-UCL"/>
</dbReference>
<dbReference type="GO" id="GO:0030301">
    <property type="term" value="P:cholesterol transport"/>
    <property type="evidence" value="ECO:0000314"/>
    <property type="project" value="MGI"/>
</dbReference>
<dbReference type="GO" id="GO:0032497">
    <property type="term" value="P:detection of lipopolysaccharide"/>
    <property type="evidence" value="ECO:0007669"/>
    <property type="project" value="Ensembl"/>
</dbReference>
<dbReference type="GO" id="GO:0001935">
    <property type="term" value="P:endothelial cell proliferation"/>
    <property type="evidence" value="ECO:0000315"/>
    <property type="project" value="MGI"/>
</dbReference>
<dbReference type="GO" id="GO:0055097">
    <property type="term" value="P:high density lipoprotein particle mediated signaling"/>
    <property type="evidence" value="ECO:0007669"/>
    <property type="project" value="Ensembl"/>
</dbReference>
<dbReference type="GO" id="GO:0034384">
    <property type="term" value="P:high-density lipoprotein particle clearance"/>
    <property type="evidence" value="ECO:0000250"/>
    <property type="project" value="BHF-UCL"/>
</dbReference>
<dbReference type="GO" id="GO:0034375">
    <property type="term" value="P:high-density lipoprotein particle remodeling"/>
    <property type="evidence" value="ECO:0000315"/>
    <property type="project" value="BHF-UCL"/>
</dbReference>
<dbReference type="GO" id="GO:0098856">
    <property type="term" value="P:intestinal lipid absorption"/>
    <property type="evidence" value="ECO:0000315"/>
    <property type="project" value="MGI"/>
</dbReference>
<dbReference type="GO" id="GO:0015920">
    <property type="term" value="P:lipopolysaccharide transport"/>
    <property type="evidence" value="ECO:0007669"/>
    <property type="project" value="Ensembl"/>
</dbReference>
<dbReference type="GO" id="GO:0034383">
    <property type="term" value="P:low-density lipoprotein particle clearance"/>
    <property type="evidence" value="ECO:0000315"/>
    <property type="project" value="BHF-UCL"/>
</dbReference>
<dbReference type="GO" id="GO:0015914">
    <property type="term" value="P:phospholipid transport"/>
    <property type="evidence" value="ECO:0000315"/>
    <property type="project" value="BHF-UCL"/>
</dbReference>
<dbReference type="GO" id="GO:0010886">
    <property type="term" value="P:positive regulation of cholesterol storage"/>
    <property type="evidence" value="ECO:0000250"/>
    <property type="project" value="BHF-UCL"/>
</dbReference>
<dbReference type="GO" id="GO:0010750">
    <property type="term" value="P:positive regulation of nitric oxide mediated signal transduction"/>
    <property type="evidence" value="ECO:0007669"/>
    <property type="project" value="Ensembl"/>
</dbReference>
<dbReference type="GO" id="GO:1902070">
    <property type="term" value="P:positive regulation of sphingolipid mediated signaling pathway"/>
    <property type="evidence" value="ECO:0007669"/>
    <property type="project" value="Ensembl"/>
</dbReference>
<dbReference type="GO" id="GO:0010867">
    <property type="term" value="P:positive regulation of triglyceride biosynthetic process"/>
    <property type="evidence" value="ECO:0000315"/>
    <property type="project" value="BHF-UCL"/>
</dbReference>
<dbReference type="GO" id="GO:0043654">
    <property type="term" value="P:recognition of apoptotic cell"/>
    <property type="evidence" value="ECO:0000250"/>
    <property type="project" value="BHF-UCL"/>
</dbReference>
<dbReference type="GO" id="GO:0010899">
    <property type="term" value="P:regulation of phosphatidylcholine catabolic process"/>
    <property type="evidence" value="ECO:0000315"/>
    <property type="project" value="BHF-UCL"/>
</dbReference>
<dbReference type="GO" id="GO:0043691">
    <property type="term" value="P:reverse cholesterol transport"/>
    <property type="evidence" value="ECO:0000315"/>
    <property type="project" value="BHF-UCL"/>
</dbReference>
<dbReference type="GO" id="GO:0070328">
    <property type="term" value="P:triglyceride homeostasis"/>
    <property type="evidence" value="ECO:0000315"/>
    <property type="project" value="BHF-UCL"/>
</dbReference>
<dbReference type="GO" id="GO:0042311">
    <property type="term" value="P:vasodilation"/>
    <property type="evidence" value="ECO:0007669"/>
    <property type="project" value="Ensembl"/>
</dbReference>
<dbReference type="GO" id="GO:0035461">
    <property type="term" value="P:vitamin transmembrane transport"/>
    <property type="evidence" value="ECO:0007669"/>
    <property type="project" value="Ensembl"/>
</dbReference>
<dbReference type="InterPro" id="IPR005428">
    <property type="entry name" value="CD36/SCARB1/SNMP1"/>
</dbReference>
<dbReference type="InterPro" id="IPR002159">
    <property type="entry name" value="CD36_fam"/>
</dbReference>
<dbReference type="PANTHER" id="PTHR11923:SF110">
    <property type="entry name" value="SCAVENGER RECEPTOR CLASS B MEMBER 1"/>
    <property type="match status" value="1"/>
</dbReference>
<dbReference type="PANTHER" id="PTHR11923">
    <property type="entry name" value="SCAVENGER RECEPTOR CLASS B TYPE-1 SR-B1"/>
    <property type="match status" value="1"/>
</dbReference>
<dbReference type="Pfam" id="PF01130">
    <property type="entry name" value="CD36"/>
    <property type="match status" value="1"/>
</dbReference>
<dbReference type="PRINTS" id="PR01610">
    <property type="entry name" value="CD36ANTIGEN"/>
</dbReference>
<dbReference type="PRINTS" id="PR01609">
    <property type="entry name" value="CD36FAMILY"/>
</dbReference>
<reference key="1">
    <citation type="journal article" date="1996" name="Science">
        <title>Identification of scavenger receptor SR-BI as a high density lipoprotein receptor.</title>
        <authorList>
            <person name="Acton S."/>
            <person name="Rigotti A."/>
            <person name="Landschulz K.T."/>
            <person name="Xu S."/>
            <person name="Hobbs H.H."/>
            <person name="Krieger M."/>
        </authorList>
    </citation>
    <scope>NUCLEOTIDE SEQUENCE [MRNA] (ISOFORM 1)</scope>
    <scope>TISSUE SPECIFICITY</scope>
</reference>
<reference key="2">
    <citation type="journal article" date="2005" name="Science">
        <title>The transcriptional landscape of the mammalian genome.</title>
        <authorList>
            <person name="Carninci P."/>
            <person name="Kasukawa T."/>
            <person name="Katayama S."/>
            <person name="Gough J."/>
            <person name="Frith M.C."/>
            <person name="Maeda N."/>
            <person name="Oyama R."/>
            <person name="Ravasi T."/>
            <person name="Lenhard B."/>
            <person name="Wells C."/>
            <person name="Kodzius R."/>
            <person name="Shimokawa K."/>
            <person name="Bajic V.B."/>
            <person name="Brenner S.E."/>
            <person name="Batalov S."/>
            <person name="Forrest A.R."/>
            <person name="Zavolan M."/>
            <person name="Davis M.J."/>
            <person name="Wilming L.G."/>
            <person name="Aidinis V."/>
            <person name="Allen J.E."/>
            <person name="Ambesi-Impiombato A."/>
            <person name="Apweiler R."/>
            <person name="Aturaliya R.N."/>
            <person name="Bailey T.L."/>
            <person name="Bansal M."/>
            <person name="Baxter L."/>
            <person name="Beisel K.W."/>
            <person name="Bersano T."/>
            <person name="Bono H."/>
            <person name="Chalk A.M."/>
            <person name="Chiu K.P."/>
            <person name="Choudhary V."/>
            <person name="Christoffels A."/>
            <person name="Clutterbuck D.R."/>
            <person name="Crowe M.L."/>
            <person name="Dalla E."/>
            <person name="Dalrymple B.P."/>
            <person name="de Bono B."/>
            <person name="Della Gatta G."/>
            <person name="di Bernardo D."/>
            <person name="Down T."/>
            <person name="Engstrom P."/>
            <person name="Fagiolini M."/>
            <person name="Faulkner G."/>
            <person name="Fletcher C.F."/>
            <person name="Fukushima T."/>
            <person name="Furuno M."/>
            <person name="Futaki S."/>
            <person name="Gariboldi M."/>
            <person name="Georgii-Hemming P."/>
            <person name="Gingeras T.R."/>
            <person name="Gojobori T."/>
            <person name="Green R.E."/>
            <person name="Gustincich S."/>
            <person name="Harbers M."/>
            <person name="Hayashi Y."/>
            <person name="Hensch T.K."/>
            <person name="Hirokawa N."/>
            <person name="Hill D."/>
            <person name="Huminiecki L."/>
            <person name="Iacono M."/>
            <person name="Ikeo K."/>
            <person name="Iwama A."/>
            <person name="Ishikawa T."/>
            <person name="Jakt M."/>
            <person name="Kanapin A."/>
            <person name="Katoh M."/>
            <person name="Kawasawa Y."/>
            <person name="Kelso J."/>
            <person name="Kitamura H."/>
            <person name="Kitano H."/>
            <person name="Kollias G."/>
            <person name="Krishnan S.P."/>
            <person name="Kruger A."/>
            <person name="Kummerfeld S.K."/>
            <person name="Kurochkin I.V."/>
            <person name="Lareau L.F."/>
            <person name="Lazarevic D."/>
            <person name="Lipovich L."/>
            <person name="Liu J."/>
            <person name="Liuni S."/>
            <person name="McWilliam S."/>
            <person name="Madan Babu M."/>
            <person name="Madera M."/>
            <person name="Marchionni L."/>
            <person name="Matsuda H."/>
            <person name="Matsuzawa S."/>
            <person name="Miki H."/>
            <person name="Mignone F."/>
            <person name="Miyake S."/>
            <person name="Morris K."/>
            <person name="Mottagui-Tabar S."/>
            <person name="Mulder N."/>
            <person name="Nakano N."/>
            <person name="Nakauchi H."/>
            <person name="Ng P."/>
            <person name="Nilsson R."/>
            <person name="Nishiguchi S."/>
            <person name="Nishikawa S."/>
            <person name="Nori F."/>
            <person name="Ohara O."/>
            <person name="Okazaki Y."/>
            <person name="Orlando V."/>
            <person name="Pang K.C."/>
            <person name="Pavan W.J."/>
            <person name="Pavesi G."/>
            <person name="Pesole G."/>
            <person name="Petrovsky N."/>
            <person name="Piazza S."/>
            <person name="Reed J."/>
            <person name="Reid J.F."/>
            <person name="Ring B.Z."/>
            <person name="Ringwald M."/>
            <person name="Rost B."/>
            <person name="Ruan Y."/>
            <person name="Salzberg S.L."/>
            <person name="Sandelin A."/>
            <person name="Schneider C."/>
            <person name="Schoenbach C."/>
            <person name="Sekiguchi K."/>
            <person name="Semple C.A."/>
            <person name="Seno S."/>
            <person name="Sessa L."/>
            <person name="Sheng Y."/>
            <person name="Shibata Y."/>
            <person name="Shimada H."/>
            <person name="Shimada K."/>
            <person name="Silva D."/>
            <person name="Sinclair B."/>
            <person name="Sperling S."/>
            <person name="Stupka E."/>
            <person name="Sugiura K."/>
            <person name="Sultana R."/>
            <person name="Takenaka Y."/>
            <person name="Taki K."/>
            <person name="Tammoja K."/>
            <person name="Tan S.L."/>
            <person name="Tang S."/>
            <person name="Taylor M.S."/>
            <person name="Tegner J."/>
            <person name="Teichmann S.A."/>
            <person name="Ueda H.R."/>
            <person name="van Nimwegen E."/>
            <person name="Verardo R."/>
            <person name="Wei C.L."/>
            <person name="Yagi K."/>
            <person name="Yamanishi H."/>
            <person name="Zabarovsky E."/>
            <person name="Zhu S."/>
            <person name="Zimmer A."/>
            <person name="Hide W."/>
            <person name="Bult C."/>
            <person name="Grimmond S.M."/>
            <person name="Teasdale R.D."/>
            <person name="Liu E.T."/>
            <person name="Brusic V."/>
            <person name="Quackenbush J."/>
            <person name="Wahlestedt C."/>
            <person name="Mattick J.S."/>
            <person name="Hume D.A."/>
            <person name="Kai C."/>
            <person name="Sasaki D."/>
            <person name="Tomaru Y."/>
            <person name="Fukuda S."/>
            <person name="Kanamori-Katayama M."/>
            <person name="Suzuki M."/>
            <person name="Aoki J."/>
            <person name="Arakawa T."/>
            <person name="Iida J."/>
            <person name="Imamura K."/>
            <person name="Itoh M."/>
            <person name="Kato T."/>
            <person name="Kawaji H."/>
            <person name="Kawagashira N."/>
            <person name="Kawashima T."/>
            <person name="Kojima M."/>
            <person name="Kondo S."/>
            <person name="Konno H."/>
            <person name="Nakano K."/>
            <person name="Ninomiya N."/>
            <person name="Nishio T."/>
            <person name="Okada M."/>
            <person name="Plessy C."/>
            <person name="Shibata K."/>
            <person name="Shiraki T."/>
            <person name="Suzuki S."/>
            <person name="Tagami M."/>
            <person name="Waki K."/>
            <person name="Watahiki A."/>
            <person name="Okamura-Oho Y."/>
            <person name="Suzuki H."/>
            <person name="Kawai J."/>
            <person name="Hayashizaki Y."/>
        </authorList>
    </citation>
    <scope>NUCLEOTIDE SEQUENCE [LARGE SCALE MRNA] (ISOFORMS 1 AND 2)</scope>
    <source>
        <strain>C57BL/6J</strain>
        <strain>NOD</strain>
        <tissue>Dendritic cell</tissue>
        <tissue>Embryo</tissue>
        <tissue>Embryonic stem cell</tissue>
        <tissue>Inner ear</tissue>
        <tissue>Testis</tissue>
    </source>
</reference>
<reference key="3">
    <citation type="submission" date="2005-07" db="EMBL/GenBank/DDBJ databases">
        <title>Cloning of mouse full open reading frames in Gateway(R) system entry vector (pDONR201).</title>
        <authorList>
            <person name="Ebert L."/>
            <person name="Muenstermann E."/>
            <person name="Schatten R."/>
            <person name="Henze S."/>
            <person name="Bohn E."/>
            <person name="Mollenhauer J."/>
            <person name="Wiemann S."/>
            <person name="Schick M."/>
            <person name="Korn B."/>
        </authorList>
    </citation>
    <scope>NUCLEOTIDE SEQUENCE [LARGE SCALE MRNA] (ISOFORM 1)</scope>
</reference>
<reference key="4">
    <citation type="journal article" date="2009" name="PLoS Biol.">
        <title>Lineage-specific biology revealed by a finished genome assembly of the mouse.</title>
        <authorList>
            <person name="Church D.M."/>
            <person name="Goodstadt L."/>
            <person name="Hillier L.W."/>
            <person name="Zody M.C."/>
            <person name="Goldstein S."/>
            <person name="She X."/>
            <person name="Bult C.J."/>
            <person name="Agarwala R."/>
            <person name="Cherry J.L."/>
            <person name="DiCuccio M."/>
            <person name="Hlavina W."/>
            <person name="Kapustin Y."/>
            <person name="Meric P."/>
            <person name="Maglott D."/>
            <person name="Birtle Z."/>
            <person name="Marques A.C."/>
            <person name="Graves T."/>
            <person name="Zhou S."/>
            <person name="Teague B."/>
            <person name="Potamousis K."/>
            <person name="Churas C."/>
            <person name="Place M."/>
            <person name="Herschleb J."/>
            <person name="Runnheim R."/>
            <person name="Forrest D."/>
            <person name="Amos-Landgraf J."/>
            <person name="Schwartz D.C."/>
            <person name="Cheng Z."/>
            <person name="Lindblad-Toh K."/>
            <person name="Eichler E.E."/>
            <person name="Ponting C.P."/>
        </authorList>
    </citation>
    <scope>NUCLEOTIDE SEQUENCE [LARGE SCALE GENOMIC DNA]</scope>
    <scope>IDENTIFICATION</scope>
    <source>
        <strain>C57BL/6J</strain>
    </source>
</reference>
<reference key="5">
    <citation type="submission" date="2005-09" db="EMBL/GenBank/DDBJ databases">
        <authorList>
            <person name="Mural R.J."/>
            <person name="Adams M.D."/>
            <person name="Myers E.W."/>
            <person name="Smith H.O."/>
            <person name="Venter J.C."/>
        </authorList>
    </citation>
    <scope>NUCLEOTIDE SEQUENCE [LARGE SCALE GENOMIC DNA]</scope>
</reference>
<reference key="6">
    <citation type="journal article" date="2004" name="Genome Res.">
        <title>The status, quality, and expansion of the NIH full-length cDNA project: the Mammalian Gene Collection (MGC).</title>
        <authorList>
            <consortium name="The MGC Project Team"/>
        </authorList>
    </citation>
    <scope>NUCLEOTIDE SEQUENCE [LARGE SCALE MRNA] (ISOFORM 1)</scope>
</reference>
<reference key="7">
    <citation type="journal article" date="1997" name="J. Lipid Res.">
        <title>Alternative forms of the scavenger receptor BI (SR-BI).</title>
        <authorList>
            <person name="Webb N.R."/>
            <person name="de Villiers W.J."/>
            <person name="Connell P.M."/>
            <person name="de Beer F.C."/>
            <person name="van der Westhuyzen D.R."/>
        </authorList>
    </citation>
    <scope>NUCLEOTIDE SEQUENCE [MRNA] OF 463-509 (ISOFORMS 1 AND 2)</scope>
    <scope>FUNCTION</scope>
    <scope>SUBCELLULAR LOCATION</scope>
    <scope>TISSUE SPECIFICITY</scope>
    <source>
        <strain>C57BL/6 X CBA</strain>
        <tissue>Liver</tissue>
    </source>
</reference>
<reference key="8">
    <citation type="journal article" date="1998" name="J. Biol. Chem.">
        <title>SR-BII, an isoform of the scavenger receptor BI containing an alternate cytoplasmic tail, mediates lipid transfer between high density lipoprotein and cells.</title>
        <authorList>
            <person name="Webb N.R."/>
            <person name="Connell P.M."/>
            <person name="Graf G.A."/>
            <person name="Smart E.J."/>
            <person name="de Villiers W.J."/>
            <person name="de Beer F.C."/>
            <person name="van der Westhuyzen D.R."/>
        </authorList>
    </citation>
    <scope>FUNCTION</scope>
    <scope>ALTERNATIVE SPLICING</scope>
    <scope>SUBCELLULAR LOCATION</scope>
    <scope>TISSUE SPECIFICITY</scope>
    <scope>PALMITOYLATION AT CYS-462</scope>
    <scope>INDUCTION BY ACTH</scope>
</reference>
<reference key="9">
    <citation type="journal article" date="2010" name="Cell">
        <title>A tissue-specific atlas of mouse protein phosphorylation and expression.</title>
        <authorList>
            <person name="Huttlin E.L."/>
            <person name="Jedrychowski M.P."/>
            <person name="Elias J.E."/>
            <person name="Goswami T."/>
            <person name="Rad R."/>
            <person name="Beausoleil S.A."/>
            <person name="Villen J."/>
            <person name="Haas W."/>
            <person name="Sowa M.E."/>
            <person name="Gygi S.P."/>
        </authorList>
    </citation>
    <scope>IDENTIFICATION BY MASS SPECTROMETRY [LARGE SCALE ANALYSIS]</scope>
    <source>
        <tissue>Liver</tissue>
        <tissue>Lung</tissue>
        <tissue>Spleen</tissue>
        <tissue>Testis</tissue>
    </source>
</reference>
<reference key="10">
    <citation type="journal article" date="2011" name="Biochemistry">
        <title>Extracellular disulfide bonds support scavenger receptor class B type I-mediated cholesterol transport.</title>
        <authorList>
            <person name="Papale G.A."/>
            <person name="Hanson P.J."/>
            <person name="Sahoo D."/>
        </authorList>
    </citation>
    <scope>DISULFIDE BONDS</scope>
</reference>
<name>SCRB1_MOUSE</name>
<sequence>MGGSSRARWVALGLGALGLLFAALGVVMILMVPSLIKQQVLKNVRIDPSSLSFGMWKEIPVPFYLSVYFFEVVNPNEVLNGQKPVVRERGPYVYREFRQKVNITFNDNDTVSFVENRSLHFQPDKSHGSESDYIVLPNILVLGGSILMESKPVSLKLMMTLALVTMGQRAFMNRTVGEILWGYDDPFVHFLNTYLPDMLPIKGKFGLFVGMNNSNSGVFTVFTGVQNFSRIHLVDKWNGLSKIDYWHSEQCNMINGTSGQMWAPFMTPESSLEFFSPEACRSMKLTYNESRVFEGIPTYRFTAPDTLFANGSVYPPNEGFCPCRESGIQNVSTCRFGAPLFLSHPHFYNADPVLSEAVLGLNPNPKEHSLFLDIHPVTGIPMNCSVKMQLSLYIKSVKGIGQTGKIEPVVLPLLWFEQSGAMGGKPLSTFYTQLVLMPQVLHYAQYVLLGLGGLLLLVPIICQLRSQEKCFLFWSGSKKGSQDKEAIQAYSESLMSPAAKGTVLQEAKL</sequence>
<evidence type="ECO:0000250" key="1"/>
<evidence type="ECO:0000250" key="2">
    <source>
        <dbReference type="UniProtKB" id="Q8WTV0"/>
    </source>
</evidence>
<evidence type="ECO:0000255" key="3"/>
<evidence type="ECO:0000269" key="4">
    <source>
    </source>
</evidence>
<evidence type="ECO:0000269" key="5">
    <source>
    </source>
</evidence>
<evidence type="ECO:0000269" key="6">
    <source>
    </source>
</evidence>
<evidence type="ECO:0000303" key="7">
    <source>
    </source>
</evidence>
<evidence type="ECO:0000303" key="8">
    <source>
    </source>
</evidence>
<evidence type="ECO:0000303" key="9">
    <source>
    </source>
</evidence>
<evidence type="ECO:0000305" key="10"/>
<evidence type="ECO:0000305" key="11">
    <source>
    </source>
</evidence>
<evidence type="ECO:0000305" key="12">
    <source>
    </source>
</evidence>
<evidence type="ECO:0007829" key="13">
    <source>
        <dbReference type="PDB" id="5KTF"/>
    </source>
</evidence>
<protein>
    <recommendedName>
        <fullName>Scavenger receptor class B member 1</fullName>
        <shortName>SRB1</shortName>
    </recommendedName>
    <alternativeName>
        <fullName>SR-BI</fullName>
    </alternativeName>
</protein>
<feature type="chain" id="PRO_0000144161" description="Scavenger receptor class B member 1">
    <location>
        <begin position="1"/>
        <end position="509"/>
    </location>
</feature>
<feature type="topological domain" description="Cytoplasmic" evidence="3">
    <location>
        <begin position="1"/>
        <end position="11"/>
    </location>
</feature>
<feature type="transmembrane region" description="Helical" evidence="3">
    <location>
        <begin position="12"/>
        <end position="32"/>
    </location>
</feature>
<feature type="topological domain" description="Extracellular" evidence="3">
    <location>
        <begin position="33"/>
        <end position="440"/>
    </location>
</feature>
<feature type="transmembrane region" description="Helical" evidence="3">
    <location>
        <begin position="441"/>
        <end position="461"/>
    </location>
</feature>
<feature type="topological domain" description="Cytoplasmic" evidence="3">
    <location>
        <begin position="462"/>
        <end position="509"/>
    </location>
</feature>
<feature type="lipid moiety-binding region" description="S-palmitoyl cysteine" evidence="12">
    <location>
        <position position="462"/>
    </location>
</feature>
<feature type="glycosylation site" description="N-linked (GlcNAc...) asparagine" evidence="3">
    <location>
        <position position="102"/>
    </location>
</feature>
<feature type="glycosylation site" description="N-linked (GlcNAc...) asparagine" evidence="3">
    <location>
        <position position="108"/>
    </location>
</feature>
<feature type="glycosylation site" description="N-linked (GlcNAc...) asparagine" evidence="3">
    <location>
        <position position="116"/>
    </location>
</feature>
<feature type="glycosylation site" description="N-linked (GlcNAc...) asparagine" evidence="3">
    <location>
        <position position="173"/>
    </location>
</feature>
<feature type="glycosylation site" description="N-linked (GlcNAc...) asparagine" evidence="3">
    <location>
        <position position="212"/>
    </location>
</feature>
<feature type="glycosylation site" description="N-linked (GlcNAc...) asparagine" evidence="3">
    <location>
        <position position="227"/>
    </location>
</feature>
<feature type="glycosylation site" description="N-linked (GlcNAc...) asparagine" evidence="3">
    <location>
        <position position="255"/>
    </location>
</feature>
<feature type="glycosylation site" description="N-linked (GlcNAc...) asparagine" evidence="3">
    <location>
        <position position="288"/>
    </location>
</feature>
<feature type="glycosylation site" description="N-linked (GlcNAc...) asparagine" evidence="3">
    <location>
        <position position="310"/>
    </location>
</feature>
<feature type="glycosylation site" description="N-linked (GlcNAc...) asparagine" evidence="3">
    <location>
        <position position="330"/>
    </location>
</feature>
<feature type="glycosylation site" description="N-linked (GlcNAc...) asparagine" evidence="3">
    <location>
        <position position="383"/>
    </location>
</feature>
<feature type="disulfide bond" evidence="11">
    <location>
        <begin position="251"/>
        <end position="384"/>
    </location>
</feature>
<feature type="splice variant" id="VSP_058986" description="In isoform 2.">
    <original>EKCFLFWSGSKKGSQDKEAIQAYSESLMSPAAKGTVLQEAKL</original>
    <variation>GPEDTISPPNLIAWSDQPPSPYTPLLEDSLSGQPTSAMA</variation>
    <location>
        <begin position="468"/>
        <end position="509"/>
    </location>
</feature>
<feature type="sequence conflict" description="In Ref. 2; BAE34368." evidence="10" ref="2">
    <original>D</original>
    <variation>G</variation>
    <location>
        <position position="235"/>
    </location>
</feature>
<feature type="sequence conflict" description="In Ref. 2; BAB27068." evidence="10" ref="2">
    <original>S</original>
    <variation>F</variation>
    <location>
        <position position="396"/>
    </location>
</feature>
<feature type="helix" evidence="13">
    <location>
        <begin position="407"/>
        <end position="417"/>
    </location>
</feature>
<feature type="turn" evidence="13">
    <location>
        <begin position="418"/>
        <end position="422"/>
    </location>
</feature>
<feature type="helix" evidence="13">
    <location>
        <begin position="427"/>
        <end position="434"/>
    </location>
</feature>
<feature type="helix" evidence="13">
    <location>
        <begin position="440"/>
        <end position="455"/>
    </location>
</feature>
<feature type="helix" evidence="13">
    <location>
        <begin position="457"/>
        <end position="468"/>
    </location>
</feature>
<feature type="strand" evidence="13">
    <location>
        <begin position="471"/>
        <end position="473"/>
    </location>
</feature>
<organism>
    <name type="scientific">Mus musculus</name>
    <name type="common">Mouse</name>
    <dbReference type="NCBI Taxonomy" id="10090"/>
    <lineage>
        <taxon>Eukaryota</taxon>
        <taxon>Metazoa</taxon>
        <taxon>Chordata</taxon>
        <taxon>Craniata</taxon>
        <taxon>Vertebrata</taxon>
        <taxon>Euteleostomi</taxon>
        <taxon>Mammalia</taxon>
        <taxon>Eutheria</taxon>
        <taxon>Euarchontoglires</taxon>
        <taxon>Glires</taxon>
        <taxon>Rodentia</taxon>
        <taxon>Myomorpha</taxon>
        <taxon>Muroidea</taxon>
        <taxon>Muridae</taxon>
        <taxon>Murinae</taxon>
        <taxon>Mus</taxon>
        <taxon>Mus</taxon>
    </lineage>
</organism>